<feature type="chain" id="PRO_0000291520" description="Trimeric intracellular cation channel type A">
    <location>
        <begin position="1"/>
        <end position="295"/>
    </location>
</feature>
<feature type="topological domain" description="Lumenal" evidence="6">
    <location>
        <begin position="1"/>
        <end position="18"/>
    </location>
</feature>
<feature type="transmembrane region" description="Helical;Name=1" evidence="4">
    <location>
        <begin position="19"/>
        <end position="37"/>
    </location>
</feature>
<feature type="topological domain" description="Cytoplasmic" evidence="6">
    <location>
        <begin position="38"/>
        <end position="51"/>
    </location>
</feature>
<feature type="transmembrane region" description="Helical;Name=2" evidence="4">
    <location>
        <begin position="52"/>
        <end position="75"/>
    </location>
</feature>
<feature type="topological domain" description="Lumenal" evidence="6">
    <location>
        <begin position="76"/>
        <end position="86"/>
    </location>
</feature>
<feature type="transmembrane region" description="Helical;Name=3" evidence="4">
    <location>
        <begin position="87"/>
        <end position="106"/>
    </location>
</feature>
<feature type="topological domain" description="Cytoplasmic" evidence="6">
    <location>
        <begin position="107"/>
        <end position="144"/>
    </location>
</feature>
<feature type="transmembrane region" description="Helical;Name=4" evidence="4">
    <location>
        <begin position="145"/>
        <end position="162"/>
    </location>
</feature>
<feature type="topological domain" description="Lumenal" evidence="6">
    <location>
        <begin position="163"/>
        <end position="182"/>
    </location>
</feature>
<feature type="transmembrane region" description="Helical;Name=5" evidence="4">
    <location>
        <begin position="183"/>
        <end position="199"/>
    </location>
</feature>
<feature type="topological domain" description="Cytoplasmic" evidence="6">
    <location>
        <begin position="200"/>
        <end position="210"/>
    </location>
</feature>
<feature type="transmembrane region" description="Helical;Name=6" evidence="4">
    <location>
        <begin position="211"/>
        <end position="227"/>
    </location>
</feature>
<feature type="topological domain" description="Lumenal" evidence="6">
    <location>
        <begin position="228"/>
        <end position="236"/>
    </location>
</feature>
<feature type="transmembrane region" description="Helical;Name=7" evidence="4">
    <location>
        <begin position="237"/>
        <end position="255"/>
    </location>
</feature>
<feature type="topological domain" description="Cytoplasmic" evidence="6">
    <location>
        <begin position="256"/>
        <end position="295"/>
    </location>
</feature>
<feature type="region of interest" description="Disordered" evidence="5">
    <location>
        <begin position="259"/>
        <end position="295"/>
    </location>
</feature>
<feature type="compositionally biased region" description="Low complexity" evidence="5">
    <location>
        <begin position="265"/>
        <end position="276"/>
    </location>
</feature>
<feature type="compositionally biased region" description="Basic and acidic residues" evidence="5">
    <location>
        <begin position="277"/>
        <end position="286"/>
    </location>
</feature>
<feature type="binding site" evidence="2">
    <location>
        <position position="74"/>
    </location>
    <ligand>
        <name>Ca(2+)</name>
        <dbReference type="ChEBI" id="CHEBI:29108"/>
    </ligand>
</feature>
<feature type="binding site" evidence="3">
    <location>
        <position position="122"/>
    </location>
    <ligand>
        <name>a 1,2-diacyl-sn-glycero-3-phospho-(1D-myo-inositol-4,5-bisphosphate)</name>
        <dbReference type="ChEBI" id="CHEBI:58456"/>
    </ligand>
</feature>
<feature type="binding site" evidence="3">
    <location>
        <position position="126"/>
    </location>
    <ligand>
        <name>a 1,2-diacyl-sn-glycero-3-phospho-(1D-myo-inositol-4,5-bisphosphate)</name>
        <dbReference type="ChEBI" id="CHEBI:58456"/>
    </ligand>
</feature>
<proteinExistence type="evidence at transcript level"/>
<keyword id="KW-0106">Calcium</keyword>
<keyword id="KW-0407">Ion channel</keyword>
<keyword id="KW-0406">Ion transport</keyword>
<keyword id="KW-0472">Membrane</keyword>
<keyword id="KW-0479">Metal-binding</keyword>
<keyword id="KW-0539">Nucleus</keyword>
<keyword id="KW-0630">Potassium</keyword>
<keyword id="KW-0631">Potassium channel</keyword>
<keyword id="KW-0633">Potassium transport</keyword>
<keyword id="KW-1185">Reference proteome</keyword>
<keyword id="KW-0703">Sarcoplasmic reticulum</keyword>
<keyword id="KW-0812">Transmembrane</keyword>
<keyword id="KW-1133">Transmembrane helix</keyword>
<keyword id="KW-0813">Transport</keyword>
<organism>
    <name type="scientific">Danio rerio</name>
    <name type="common">Zebrafish</name>
    <name type="synonym">Brachydanio rerio</name>
    <dbReference type="NCBI Taxonomy" id="7955"/>
    <lineage>
        <taxon>Eukaryota</taxon>
        <taxon>Metazoa</taxon>
        <taxon>Chordata</taxon>
        <taxon>Craniata</taxon>
        <taxon>Vertebrata</taxon>
        <taxon>Euteleostomi</taxon>
        <taxon>Actinopterygii</taxon>
        <taxon>Neopterygii</taxon>
        <taxon>Teleostei</taxon>
        <taxon>Ostariophysi</taxon>
        <taxon>Cypriniformes</taxon>
        <taxon>Danionidae</taxon>
        <taxon>Danioninae</taxon>
        <taxon>Danio</taxon>
    </lineage>
</organism>
<dbReference type="EMBL" id="BC064309">
    <property type="protein sequence ID" value="AAH64309.1"/>
    <property type="molecule type" value="mRNA"/>
</dbReference>
<dbReference type="RefSeq" id="NP_957194.1">
    <property type="nucleotide sequence ID" value="NM_200900.1"/>
</dbReference>
<dbReference type="SMR" id="Q6P2T0"/>
<dbReference type="FunCoup" id="Q6P2T0">
    <property type="interactions" value="1029"/>
</dbReference>
<dbReference type="STRING" id="7955.ENSDARP00000037150"/>
<dbReference type="PaxDb" id="7955-ENSDARP00000037150"/>
<dbReference type="Ensembl" id="ENSDART00000035560">
    <property type="protein sequence ID" value="ENSDARP00000037150"/>
    <property type="gene ID" value="ENSDARG00000024047"/>
</dbReference>
<dbReference type="GeneID" id="393874"/>
<dbReference type="KEGG" id="dre:393874"/>
<dbReference type="AGR" id="ZFIN:ZDB-GENE-040426-1888"/>
<dbReference type="CTD" id="79041"/>
<dbReference type="ZFIN" id="ZDB-GENE-040426-1888">
    <property type="gene designation" value="tmem38a"/>
</dbReference>
<dbReference type="eggNOG" id="KOG3944">
    <property type="taxonomic scope" value="Eukaryota"/>
</dbReference>
<dbReference type="HOGENOM" id="CLU_076376_0_1_1"/>
<dbReference type="InParanoid" id="Q6P2T0"/>
<dbReference type="OMA" id="FSKMAMF"/>
<dbReference type="OrthoDB" id="195817at2759"/>
<dbReference type="PhylomeDB" id="Q6P2T0"/>
<dbReference type="TreeFam" id="TF313483"/>
<dbReference type="PRO" id="PR:Q6P2T0"/>
<dbReference type="Proteomes" id="UP000000437">
    <property type="component" value="Chromosome 11"/>
</dbReference>
<dbReference type="Bgee" id="ENSDARG00000024047">
    <property type="expression patterns" value="Expressed in muscle tissue and 22 other cell types or tissues"/>
</dbReference>
<dbReference type="GO" id="GO:0031965">
    <property type="term" value="C:nuclear membrane"/>
    <property type="evidence" value="ECO:0000250"/>
    <property type="project" value="UniProtKB"/>
</dbReference>
<dbReference type="GO" id="GO:0033017">
    <property type="term" value="C:sarcoplasmic reticulum membrane"/>
    <property type="evidence" value="ECO:0000250"/>
    <property type="project" value="UniProtKB"/>
</dbReference>
<dbReference type="GO" id="GO:0042802">
    <property type="term" value="F:identical protein binding"/>
    <property type="evidence" value="ECO:0007669"/>
    <property type="project" value="InterPro"/>
</dbReference>
<dbReference type="GO" id="GO:0046872">
    <property type="term" value="F:metal ion binding"/>
    <property type="evidence" value="ECO:0007669"/>
    <property type="project" value="UniProtKB-KW"/>
</dbReference>
<dbReference type="GO" id="GO:0005267">
    <property type="term" value="F:potassium channel activity"/>
    <property type="evidence" value="ECO:0000250"/>
    <property type="project" value="UniProtKB"/>
</dbReference>
<dbReference type="GO" id="GO:0051279">
    <property type="term" value="P:regulation of release of sequestered calcium ion into cytosol"/>
    <property type="evidence" value="ECO:0000250"/>
    <property type="project" value="UniProtKB"/>
</dbReference>
<dbReference type="InterPro" id="IPR007866">
    <property type="entry name" value="TRIC_channel"/>
</dbReference>
<dbReference type="PANTHER" id="PTHR12454">
    <property type="entry name" value="TRIMERIC INTRACELLULAR CATION CHANNEL"/>
    <property type="match status" value="1"/>
</dbReference>
<dbReference type="PANTHER" id="PTHR12454:SF3">
    <property type="entry name" value="TRIMERIC INTRACELLULAR CATION CHANNEL TYPE A"/>
    <property type="match status" value="1"/>
</dbReference>
<dbReference type="Pfam" id="PF05197">
    <property type="entry name" value="TRIC"/>
    <property type="match status" value="1"/>
</dbReference>
<comment type="function">
    <text evidence="1">Intracellular monovalent cation channel required for maintenance of rapid intracellular calcium release. Acts as a potassium counter-ion channel that functions in synchronization with calcium release from intracellular stores. Opened by a change of voltage within the sarcoplasmic reticulum lumen.</text>
</comment>
<comment type="catalytic activity">
    <reaction evidence="1">
        <text>K(+)(in) = K(+)(out)</text>
        <dbReference type="Rhea" id="RHEA:29463"/>
        <dbReference type="ChEBI" id="CHEBI:29103"/>
    </reaction>
</comment>
<comment type="activity regulation">
    <text evidence="1">Channel activity is activated by a change of voltage within the sarcoplasmic reticulum lumen and blocked by luminal high Ca(2+) levels.</text>
</comment>
<comment type="subunit">
    <text evidence="1">Homotrimer; conformation seems to be controled by binding to diacylglycerol (DAG).</text>
</comment>
<comment type="subcellular location">
    <subcellularLocation>
        <location evidence="1">Sarcoplasmic reticulum membrane</location>
        <topology evidence="1">Multi-pass membrane protein</topology>
    </subcellularLocation>
    <subcellularLocation>
        <location evidence="1">Nucleus membrane</location>
    </subcellularLocation>
</comment>
<comment type="similarity">
    <text evidence="6">Belongs to the TMEM38 family.</text>
</comment>
<reference key="1">
    <citation type="submission" date="2003-12" db="EMBL/GenBank/DDBJ databases">
        <authorList>
            <consortium name="NIH - Zebrafish Gene Collection (ZGC) project"/>
        </authorList>
    </citation>
    <scope>NUCLEOTIDE SEQUENCE [LARGE SCALE MRNA]</scope>
</reference>
<evidence type="ECO:0000250" key="1">
    <source>
        <dbReference type="UniProtKB" id="A5A6S6"/>
    </source>
</evidence>
<evidence type="ECO:0000250" key="2">
    <source>
        <dbReference type="UniProtKB" id="Q5ZK43"/>
    </source>
</evidence>
<evidence type="ECO:0000250" key="3">
    <source>
        <dbReference type="UniProtKB" id="Q9NA73"/>
    </source>
</evidence>
<evidence type="ECO:0000255" key="4"/>
<evidence type="ECO:0000256" key="5">
    <source>
        <dbReference type="SAM" id="MobiDB-lite"/>
    </source>
</evidence>
<evidence type="ECO:0000305" key="6"/>
<sequence>MEVLDVLNLGEIAQYFSKMAMFPVFDVAYYIVSILYLKYEPGAVEVSRRSPVASWLCAMLYCFGSYILADIMLGVCPIDYFHNNSHILLASAVWYLIFFCPLNLFYKCVAFMPVKLVLVALKEVVRTRKIAAGVHHAHHAYHHGWLIMVITGYVKGSGVALMSNFEQLLRGVWKPETNEVLNMSFPTKASLYGAILFTLQEAHVLPVSKSTLICLFTLFMVSSKVFMTARHSHGSPFALIESWVCHVLFGSPLGTEDAHDHHHAAPAAAPAPLSPAKNKEELSEGTRKRKSKKAE</sequence>
<name>TM38A_DANRE</name>
<gene>
    <name type="primary">tmem38a</name>
    <name type="ORF">zgc:77831</name>
</gene>
<protein>
    <recommendedName>
        <fullName>Trimeric intracellular cation channel type A</fullName>
        <shortName>TRIC-A</shortName>
        <shortName>TRICA</shortName>
    </recommendedName>
    <alternativeName>
        <fullName>Transmembrane protein 38A</fullName>
    </alternativeName>
</protein>
<accession>Q6P2T0</accession>